<accession>P9WK86</accession>
<accession>F2GF45</accession>
<accession>L0T9I5</accession>
<accession>P71667</accession>
<accession>Q7D8H2</accession>
<evidence type="ECO:0000250" key="1">
    <source>
        <dbReference type="UniProtKB" id="P9WK87"/>
    </source>
</evidence>
<evidence type="ECO:0000250" key="2">
    <source>
        <dbReference type="UniProtKB" id="Q5NUF3"/>
    </source>
</evidence>
<evidence type="ECO:0000305" key="3"/>
<keyword id="KW-0378">Hydrolase</keyword>
<keyword id="KW-1185">Reference proteome</keyword>
<keyword id="KW-0719">Serine esterase</keyword>
<gene>
    <name type="primary">nlhH</name>
    <name type="synonym">lipH</name>
    <name type="ordered locus">MT1443</name>
</gene>
<protein>
    <recommendedName>
        <fullName evidence="1">Carboxylesterase NlhH</fullName>
        <ecNumber evidence="1">3.1.1.1</ecNumber>
    </recommendedName>
</protein>
<organism>
    <name type="scientific">Mycobacterium tuberculosis (strain CDC 1551 / Oshkosh)</name>
    <dbReference type="NCBI Taxonomy" id="83331"/>
    <lineage>
        <taxon>Bacteria</taxon>
        <taxon>Bacillati</taxon>
        <taxon>Actinomycetota</taxon>
        <taxon>Actinomycetes</taxon>
        <taxon>Mycobacteriales</taxon>
        <taxon>Mycobacteriaceae</taxon>
        <taxon>Mycobacterium</taxon>
        <taxon>Mycobacterium tuberculosis complex</taxon>
    </lineage>
</organism>
<proteinExistence type="inferred from homology"/>
<feature type="chain" id="PRO_0000427697" description="Carboxylesterase NlhH">
    <location>
        <begin position="1"/>
        <end position="319"/>
    </location>
</feature>
<feature type="short sequence motif" description="Involved in the stabilization of the negatively charged intermediate by the formation of the oxyanion hole" evidence="2">
    <location>
        <begin position="88"/>
        <end position="90"/>
    </location>
</feature>
<feature type="active site" evidence="2">
    <location>
        <position position="162"/>
    </location>
</feature>
<feature type="active site" evidence="2">
    <location>
        <position position="260"/>
    </location>
</feature>
<feature type="active site" evidence="2">
    <location>
        <position position="290"/>
    </location>
</feature>
<name>NLHH_MYCTO</name>
<dbReference type="EC" id="3.1.1.1" evidence="1"/>
<dbReference type="EMBL" id="AE000516">
    <property type="protein sequence ID" value="AAK45708.1"/>
    <property type="molecule type" value="Genomic_DNA"/>
</dbReference>
<dbReference type="PIR" id="D70900">
    <property type="entry name" value="D70900"/>
</dbReference>
<dbReference type="RefSeq" id="WP_003407276.1">
    <property type="nucleotide sequence ID" value="NZ_KK341227.1"/>
</dbReference>
<dbReference type="SMR" id="P9WK86"/>
<dbReference type="MEROPS" id="S09.951"/>
<dbReference type="KEGG" id="mtc:MT1443"/>
<dbReference type="PATRIC" id="fig|83331.31.peg.1551"/>
<dbReference type="HOGENOM" id="CLU_012494_6_4_11"/>
<dbReference type="Proteomes" id="UP000001020">
    <property type="component" value="Chromosome"/>
</dbReference>
<dbReference type="GO" id="GO:0106435">
    <property type="term" value="F:carboxylesterase activity"/>
    <property type="evidence" value="ECO:0007669"/>
    <property type="project" value="UniProtKB-EC"/>
</dbReference>
<dbReference type="FunFam" id="3.40.50.1820:FF:000089">
    <property type="entry name" value="Alpha/beta hydrolase"/>
    <property type="match status" value="1"/>
</dbReference>
<dbReference type="Gene3D" id="3.40.50.1820">
    <property type="entry name" value="alpha/beta hydrolase"/>
    <property type="match status" value="1"/>
</dbReference>
<dbReference type="InterPro" id="IPR013094">
    <property type="entry name" value="AB_hydrolase_3"/>
</dbReference>
<dbReference type="InterPro" id="IPR029058">
    <property type="entry name" value="AB_hydrolase_fold"/>
</dbReference>
<dbReference type="InterPro" id="IPR050300">
    <property type="entry name" value="GDXG_lipolytic_enzyme"/>
</dbReference>
<dbReference type="PANTHER" id="PTHR48081">
    <property type="entry name" value="AB HYDROLASE SUPERFAMILY PROTEIN C4A8.06C"/>
    <property type="match status" value="1"/>
</dbReference>
<dbReference type="PANTHER" id="PTHR48081:SF8">
    <property type="entry name" value="ALPHA_BETA HYDROLASE FOLD-3 DOMAIN-CONTAINING PROTEIN-RELATED"/>
    <property type="match status" value="1"/>
</dbReference>
<dbReference type="Pfam" id="PF07859">
    <property type="entry name" value="Abhydrolase_3"/>
    <property type="match status" value="1"/>
</dbReference>
<dbReference type="SUPFAM" id="SSF53474">
    <property type="entry name" value="alpha/beta-Hydrolases"/>
    <property type="match status" value="1"/>
</dbReference>
<sequence length="319" mass="33906">MTEPTVARPDIDPVLKMLLDTFPVTFTAADGVEVARARLRQLKTPPELLPELRIEERTVGYDGLTDIPVRVYWPPVVRDNLPVVVYYHGGGWSLGGLDTHDPVARAHAVGAQAIVVSVDYRLAPEHPYPAGIDDSWAALRWVGENAAELGGDPSRIAVAGDSAGGNISAVMAQLARDVGGPPLVFQLLWYPTTMADLSLPSFTENADAPILDRDVIDAFLAWYVPGLDISDHTMLPTTLAPGNADLSGLPPAFIGTAEHDPLRDDGACYAELLTAAGVSVELSNEPTMVHGYVNFALVVPAAAEATGRGLAALKRALHA</sequence>
<comment type="function">
    <text evidence="1">Hydrolyzes various short-chain esters.</text>
</comment>
<comment type="catalytic activity">
    <reaction evidence="1">
        <text>a carboxylic ester + H2O = an alcohol + a carboxylate + H(+)</text>
        <dbReference type="Rhea" id="RHEA:21164"/>
        <dbReference type="ChEBI" id="CHEBI:15377"/>
        <dbReference type="ChEBI" id="CHEBI:15378"/>
        <dbReference type="ChEBI" id="CHEBI:29067"/>
        <dbReference type="ChEBI" id="CHEBI:30879"/>
        <dbReference type="ChEBI" id="CHEBI:33308"/>
        <dbReference type="EC" id="3.1.1.1"/>
    </reaction>
</comment>
<comment type="subunit">
    <text evidence="1">Monomer.</text>
</comment>
<comment type="similarity">
    <text evidence="3">Belongs to the 'GDXG' lipolytic enzyme family.</text>
</comment>
<reference key="1">
    <citation type="journal article" date="2002" name="J. Bacteriol.">
        <title>Whole-genome comparison of Mycobacterium tuberculosis clinical and laboratory strains.</title>
        <authorList>
            <person name="Fleischmann R.D."/>
            <person name="Alland D."/>
            <person name="Eisen J.A."/>
            <person name="Carpenter L."/>
            <person name="White O."/>
            <person name="Peterson J.D."/>
            <person name="DeBoy R.T."/>
            <person name="Dodson R.J."/>
            <person name="Gwinn M.L."/>
            <person name="Haft D.H."/>
            <person name="Hickey E.K."/>
            <person name="Kolonay J.F."/>
            <person name="Nelson W.C."/>
            <person name="Umayam L.A."/>
            <person name="Ermolaeva M.D."/>
            <person name="Salzberg S.L."/>
            <person name="Delcher A."/>
            <person name="Utterback T.R."/>
            <person name="Weidman J.F."/>
            <person name="Khouri H.M."/>
            <person name="Gill J."/>
            <person name="Mikula A."/>
            <person name="Bishai W."/>
            <person name="Jacobs W.R. Jr."/>
            <person name="Venter J.C."/>
            <person name="Fraser C.M."/>
        </authorList>
    </citation>
    <scope>NUCLEOTIDE SEQUENCE [LARGE SCALE GENOMIC DNA]</scope>
    <source>
        <strain>CDC 1551 / Oshkosh</strain>
    </source>
</reference>